<proteinExistence type="inferred from homology"/>
<name>RL9_GLUDA</name>
<evidence type="ECO:0000255" key="1">
    <source>
        <dbReference type="HAMAP-Rule" id="MF_00503"/>
    </source>
</evidence>
<evidence type="ECO:0000256" key="2">
    <source>
        <dbReference type="SAM" id="MobiDB-lite"/>
    </source>
</evidence>
<evidence type="ECO:0000305" key="3"/>
<dbReference type="EMBL" id="AM889285">
    <property type="protein sequence ID" value="CAP57274.1"/>
    <property type="molecule type" value="Genomic_DNA"/>
</dbReference>
<dbReference type="EMBL" id="CP001189">
    <property type="protein sequence ID" value="ACI52770.1"/>
    <property type="molecule type" value="Genomic_DNA"/>
</dbReference>
<dbReference type="RefSeq" id="WP_012227813.1">
    <property type="nucleotide sequence ID" value="NC_010125.1"/>
</dbReference>
<dbReference type="SMR" id="A9H1M3"/>
<dbReference type="STRING" id="272568.GDI3331"/>
<dbReference type="KEGG" id="gdi:GDI3331"/>
<dbReference type="KEGG" id="gdj:Gdia_3040"/>
<dbReference type="eggNOG" id="COG0359">
    <property type="taxonomic scope" value="Bacteria"/>
</dbReference>
<dbReference type="HOGENOM" id="CLU_078938_1_0_5"/>
<dbReference type="OrthoDB" id="9788336at2"/>
<dbReference type="Proteomes" id="UP000001176">
    <property type="component" value="Chromosome"/>
</dbReference>
<dbReference type="GO" id="GO:1990904">
    <property type="term" value="C:ribonucleoprotein complex"/>
    <property type="evidence" value="ECO:0007669"/>
    <property type="project" value="UniProtKB-KW"/>
</dbReference>
<dbReference type="GO" id="GO:0005840">
    <property type="term" value="C:ribosome"/>
    <property type="evidence" value="ECO:0007669"/>
    <property type="project" value="UniProtKB-KW"/>
</dbReference>
<dbReference type="GO" id="GO:0019843">
    <property type="term" value="F:rRNA binding"/>
    <property type="evidence" value="ECO:0007669"/>
    <property type="project" value="UniProtKB-UniRule"/>
</dbReference>
<dbReference type="GO" id="GO:0003735">
    <property type="term" value="F:structural constituent of ribosome"/>
    <property type="evidence" value="ECO:0007669"/>
    <property type="project" value="InterPro"/>
</dbReference>
<dbReference type="GO" id="GO:0006412">
    <property type="term" value="P:translation"/>
    <property type="evidence" value="ECO:0007669"/>
    <property type="project" value="UniProtKB-UniRule"/>
</dbReference>
<dbReference type="Gene3D" id="3.10.430.100">
    <property type="entry name" value="Ribosomal protein L9, C-terminal domain"/>
    <property type="match status" value="1"/>
</dbReference>
<dbReference type="Gene3D" id="3.40.5.10">
    <property type="entry name" value="Ribosomal protein L9, N-terminal domain"/>
    <property type="match status" value="1"/>
</dbReference>
<dbReference type="HAMAP" id="MF_00503">
    <property type="entry name" value="Ribosomal_bL9"/>
    <property type="match status" value="1"/>
</dbReference>
<dbReference type="InterPro" id="IPR000244">
    <property type="entry name" value="Ribosomal_bL9"/>
</dbReference>
<dbReference type="InterPro" id="IPR009027">
    <property type="entry name" value="Ribosomal_bL9/RNase_H1_N"/>
</dbReference>
<dbReference type="InterPro" id="IPR020594">
    <property type="entry name" value="Ribosomal_bL9_bac/chp"/>
</dbReference>
<dbReference type="InterPro" id="IPR020069">
    <property type="entry name" value="Ribosomal_bL9_C"/>
</dbReference>
<dbReference type="InterPro" id="IPR036791">
    <property type="entry name" value="Ribosomal_bL9_C_sf"/>
</dbReference>
<dbReference type="InterPro" id="IPR020070">
    <property type="entry name" value="Ribosomal_bL9_N"/>
</dbReference>
<dbReference type="InterPro" id="IPR036935">
    <property type="entry name" value="Ribosomal_bL9_N_sf"/>
</dbReference>
<dbReference type="NCBIfam" id="TIGR00158">
    <property type="entry name" value="L9"/>
    <property type="match status" value="1"/>
</dbReference>
<dbReference type="PANTHER" id="PTHR21368">
    <property type="entry name" value="50S RIBOSOMAL PROTEIN L9"/>
    <property type="match status" value="1"/>
</dbReference>
<dbReference type="Pfam" id="PF03948">
    <property type="entry name" value="Ribosomal_L9_C"/>
    <property type="match status" value="1"/>
</dbReference>
<dbReference type="Pfam" id="PF01281">
    <property type="entry name" value="Ribosomal_L9_N"/>
    <property type="match status" value="1"/>
</dbReference>
<dbReference type="SUPFAM" id="SSF55658">
    <property type="entry name" value="L9 N-domain-like"/>
    <property type="match status" value="1"/>
</dbReference>
<dbReference type="SUPFAM" id="SSF55653">
    <property type="entry name" value="Ribosomal protein L9 C-domain"/>
    <property type="match status" value="1"/>
</dbReference>
<dbReference type="PROSITE" id="PS00651">
    <property type="entry name" value="RIBOSOMAL_L9"/>
    <property type="match status" value="1"/>
</dbReference>
<comment type="function">
    <text evidence="1">Binds to the 23S rRNA.</text>
</comment>
<comment type="similarity">
    <text evidence="1">Belongs to the bacterial ribosomal protein bL9 family.</text>
</comment>
<sequence>MSAVELILLQRVENLGQMGDVVKVKPGYARNFLLPQGKAIRANALNRERFERERVQLEALNLKRREEAERLSERMHGLSVVLIRQAGDSGSLYGSVTTRDIAEAATAAGLTVARTQVILENPIKQLGLYDVRVALHPEVSIPVTVNVARSEEEAERQARGEEIGVEKEEPSGFVEEALEETVEAPAEA</sequence>
<reference key="1">
    <citation type="journal article" date="2009" name="BMC Genomics">
        <title>Complete genome sequence of the sugarcane nitrogen-fixing endophyte Gluconacetobacter diazotrophicus Pal5.</title>
        <authorList>
            <person name="Bertalan M."/>
            <person name="Albano R."/>
            <person name="de Padua V."/>
            <person name="Rouws L."/>
            <person name="Rojas C."/>
            <person name="Hemerly A."/>
            <person name="Teixeira K."/>
            <person name="Schwab S."/>
            <person name="Araujo J."/>
            <person name="Oliveira A."/>
            <person name="Franca L."/>
            <person name="Magalhaes V."/>
            <person name="Alqueres S."/>
            <person name="Cardoso A."/>
            <person name="Almeida W."/>
            <person name="Loureiro M.M."/>
            <person name="Nogueira E."/>
            <person name="Cidade D."/>
            <person name="Oliveira D."/>
            <person name="Simao T."/>
            <person name="Macedo J."/>
            <person name="Valadao A."/>
            <person name="Dreschsel M."/>
            <person name="Freitas F."/>
            <person name="Vidal M."/>
            <person name="Guedes H."/>
            <person name="Rodrigues E."/>
            <person name="Meneses C."/>
            <person name="Brioso P."/>
            <person name="Pozzer L."/>
            <person name="Figueiredo D."/>
            <person name="Montano H."/>
            <person name="Junior J."/>
            <person name="de Souza Filho G."/>
            <person name="Martin Quintana Flores V."/>
            <person name="Ferreira B."/>
            <person name="Branco A."/>
            <person name="Gonzalez P."/>
            <person name="Guillobel H."/>
            <person name="Lemos M."/>
            <person name="Seibel L."/>
            <person name="Macedo J."/>
            <person name="Alves-Ferreira M."/>
            <person name="Sachetto-Martins G."/>
            <person name="Coelho A."/>
            <person name="Santos E."/>
            <person name="Amaral G."/>
            <person name="Neves A."/>
            <person name="Pacheco A.B."/>
            <person name="Carvalho D."/>
            <person name="Lery L."/>
            <person name="Bisch P."/>
            <person name="Rossle S.C."/>
            <person name="Urmenyi T."/>
            <person name="Rael Pereira A."/>
            <person name="Silva R."/>
            <person name="Rondinelli E."/>
            <person name="von Kruger W."/>
            <person name="Martins O."/>
            <person name="Baldani J.I."/>
            <person name="Ferreira P.C."/>
        </authorList>
    </citation>
    <scope>NUCLEOTIDE SEQUENCE [LARGE SCALE GENOMIC DNA]</scope>
    <source>
        <strain>ATCC 49037 / DSM 5601 / CCUG 37298 / CIP 103539 / LMG 7603 / PAl5</strain>
    </source>
</reference>
<reference key="2">
    <citation type="journal article" date="2010" name="Stand. Genomic Sci.">
        <title>Two genome sequences of the same bacterial strain, Gluconacetobacter diazotrophicus PAl 5, suggest a new standard in genome sequence submission.</title>
        <authorList>
            <person name="Giongo A."/>
            <person name="Tyler H.L."/>
            <person name="Zipperer U.N."/>
            <person name="Triplett E.W."/>
        </authorList>
    </citation>
    <scope>NUCLEOTIDE SEQUENCE [LARGE SCALE GENOMIC DNA]</scope>
    <source>
        <strain>ATCC 49037 / DSM 5601 / CCUG 37298 / CIP 103539 / LMG 7603 / PAl5</strain>
    </source>
</reference>
<feature type="chain" id="PRO_1000081482" description="Large ribosomal subunit protein bL9">
    <location>
        <begin position="1"/>
        <end position="188"/>
    </location>
</feature>
<feature type="region of interest" description="Disordered" evidence="2">
    <location>
        <begin position="149"/>
        <end position="188"/>
    </location>
</feature>
<feature type="compositionally biased region" description="Basic and acidic residues" evidence="2">
    <location>
        <begin position="149"/>
        <end position="170"/>
    </location>
</feature>
<accession>A9H1M3</accession>
<accession>B5ZIY0</accession>
<protein>
    <recommendedName>
        <fullName evidence="1">Large ribosomal subunit protein bL9</fullName>
    </recommendedName>
    <alternativeName>
        <fullName evidence="3">50S ribosomal protein L9</fullName>
    </alternativeName>
</protein>
<gene>
    <name evidence="1" type="primary">rplI</name>
    <name type="ordered locus">GDI3331</name>
    <name type="ordered locus">Gdia_3040</name>
</gene>
<organism>
    <name type="scientific">Gluconacetobacter diazotrophicus (strain ATCC 49037 / DSM 5601 / CCUG 37298 / CIP 103539 / LMG 7603 / PAl5)</name>
    <dbReference type="NCBI Taxonomy" id="272568"/>
    <lineage>
        <taxon>Bacteria</taxon>
        <taxon>Pseudomonadati</taxon>
        <taxon>Pseudomonadota</taxon>
        <taxon>Alphaproteobacteria</taxon>
        <taxon>Acetobacterales</taxon>
        <taxon>Acetobacteraceae</taxon>
        <taxon>Gluconacetobacter</taxon>
    </lineage>
</organism>
<keyword id="KW-1185">Reference proteome</keyword>
<keyword id="KW-0687">Ribonucleoprotein</keyword>
<keyword id="KW-0689">Ribosomal protein</keyword>
<keyword id="KW-0694">RNA-binding</keyword>
<keyword id="KW-0699">rRNA-binding</keyword>